<protein>
    <recommendedName>
        <fullName evidence="1">Elongation factor P--(R)-beta-lysine ligase</fullName>
        <shortName evidence="1">EF-P--(R)-beta-lysine ligase</shortName>
        <ecNumber evidence="1">6.3.2.-</ecNumber>
    </recommendedName>
    <alternativeName>
        <fullName evidence="1">EF-P post-translational modification enzyme A</fullName>
    </alternativeName>
    <alternativeName>
        <fullName evidence="1">EF-P-lysine lysyltransferase</fullName>
    </alternativeName>
</protein>
<organism>
    <name type="scientific">Klebsiella pneumoniae subsp. pneumoniae (strain ATCC 700721 / MGH 78578)</name>
    <dbReference type="NCBI Taxonomy" id="272620"/>
    <lineage>
        <taxon>Bacteria</taxon>
        <taxon>Pseudomonadati</taxon>
        <taxon>Pseudomonadota</taxon>
        <taxon>Gammaproteobacteria</taxon>
        <taxon>Enterobacterales</taxon>
        <taxon>Enterobacteriaceae</taxon>
        <taxon>Klebsiella/Raoultella group</taxon>
        <taxon>Klebsiella</taxon>
        <taxon>Klebsiella pneumoniae complex</taxon>
    </lineage>
</organism>
<gene>
    <name evidence="1" type="primary">epmA</name>
    <name type="synonym">yjeA</name>
    <name type="ordered locus">KPN78578_44840</name>
    <name type="ORF">KPN_04554</name>
</gene>
<sequence length="325" mass="36846">MSETATWQPSAPIPNLLKRAAVMAEIRRFFTDRGVLEVETPCMSQATVTDIHLFPFETRFVGPGHSQGLNLYLMTSPEYHMKRLLAAGCGPVFQLCRSFRNEEMGRHHNPEFTMLEWYRPCYDMYRLINEVDDLLQQVLECQPAESLSYQQAFQRHLEIDPLSADKAQLREVAAKLDLSNIADTEEDRDTLLQLLFTMGVEPHIGKDRPTFIYHFPATQASLAQISPEDHRVAERFEVYYKGIELANGFHELTDAHEQRLRFEQDNRKRAARGLPQQPIDNNLLAALEAGLPDCSGVALGVDRVVMLALGAESIGEVIAFTVDRA</sequence>
<accession>A6TH74</accession>
<comment type="function">
    <text evidence="1">With EpmB is involved in the beta-lysylation step of the post-translational modification of translation elongation factor P (EF-P). Catalyzes the ATP-dependent activation of (R)-beta-lysine produced by EpmB, forming a lysyl-adenylate, from which the beta-lysyl moiety is then transferred to the epsilon-amino group of a conserved specific lysine residue in EF-P.</text>
</comment>
<comment type="catalytic activity">
    <reaction evidence="1">
        <text>D-beta-lysine + L-lysyl-[protein] + ATP = N(6)-((3R)-3,6-diaminohexanoyl)-L-lysyl-[protein] + AMP + diphosphate + H(+)</text>
        <dbReference type="Rhea" id="RHEA:83435"/>
        <dbReference type="Rhea" id="RHEA-COMP:9752"/>
        <dbReference type="Rhea" id="RHEA-COMP:20131"/>
        <dbReference type="ChEBI" id="CHEBI:15378"/>
        <dbReference type="ChEBI" id="CHEBI:29969"/>
        <dbReference type="ChEBI" id="CHEBI:30616"/>
        <dbReference type="ChEBI" id="CHEBI:33019"/>
        <dbReference type="ChEBI" id="CHEBI:84138"/>
        <dbReference type="ChEBI" id="CHEBI:156053"/>
        <dbReference type="ChEBI" id="CHEBI:456215"/>
    </reaction>
    <physiologicalReaction direction="left-to-right" evidence="1">
        <dbReference type="Rhea" id="RHEA:83436"/>
    </physiologicalReaction>
</comment>
<comment type="subunit">
    <text evidence="1">Homodimer.</text>
</comment>
<comment type="similarity">
    <text evidence="1">Belongs to the class-II aminoacyl-tRNA synthetase family. EpmA subfamily.</text>
</comment>
<keyword id="KW-0067">ATP-binding</keyword>
<keyword id="KW-0436">Ligase</keyword>
<keyword id="KW-0547">Nucleotide-binding</keyword>
<reference key="1">
    <citation type="submission" date="2006-09" db="EMBL/GenBank/DDBJ databases">
        <authorList>
            <consortium name="The Klebsiella pneumonia Genome Sequencing Project"/>
            <person name="McClelland M."/>
            <person name="Sanderson E.K."/>
            <person name="Spieth J."/>
            <person name="Clifton W.S."/>
            <person name="Latreille P."/>
            <person name="Sabo A."/>
            <person name="Pepin K."/>
            <person name="Bhonagiri V."/>
            <person name="Porwollik S."/>
            <person name="Ali J."/>
            <person name="Wilson R.K."/>
        </authorList>
    </citation>
    <scope>NUCLEOTIDE SEQUENCE [LARGE SCALE GENOMIC DNA]</scope>
    <source>
        <strain>ATCC 700721 / MGH 78578</strain>
    </source>
</reference>
<evidence type="ECO:0000255" key="1">
    <source>
        <dbReference type="HAMAP-Rule" id="MF_00174"/>
    </source>
</evidence>
<name>EPMA_KLEP7</name>
<dbReference type="EC" id="6.3.2.-" evidence="1"/>
<dbReference type="EMBL" id="CP000647">
    <property type="protein sequence ID" value="ABR79908.1"/>
    <property type="molecule type" value="Genomic_DNA"/>
</dbReference>
<dbReference type="RefSeq" id="WP_004146714.1">
    <property type="nucleotide sequence ID" value="NC_009648.1"/>
</dbReference>
<dbReference type="SMR" id="A6TH74"/>
<dbReference type="STRING" id="272620.KPN_04554"/>
<dbReference type="PaxDb" id="272620-KPN_04554"/>
<dbReference type="EnsemblBacteria" id="ABR79908">
    <property type="protein sequence ID" value="ABR79908"/>
    <property type="gene ID" value="KPN_04554"/>
</dbReference>
<dbReference type="KEGG" id="kpn:KPN_04554"/>
<dbReference type="HOGENOM" id="CLU_008255_1_1_6"/>
<dbReference type="Proteomes" id="UP000000265">
    <property type="component" value="Chromosome"/>
</dbReference>
<dbReference type="GO" id="GO:0005829">
    <property type="term" value="C:cytosol"/>
    <property type="evidence" value="ECO:0007669"/>
    <property type="project" value="TreeGrafter"/>
</dbReference>
<dbReference type="GO" id="GO:0016880">
    <property type="term" value="F:acid-ammonia (or amide) ligase activity"/>
    <property type="evidence" value="ECO:0007669"/>
    <property type="project" value="UniProtKB-UniRule"/>
</dbReference>
<dbReference type="GO" id="GO:0005524">
    <property type="term" value="F:ATP binding"/>
    <property type="evidence" value="ECO:0007669"/>
    <property type="project" value="UniProtKB-UniRule"/>
</dbReference>
<dbReference type="GO" id="GO:0004824">
    <property type="term" value="F:lysine-tRNA ligase activity"/>
    <property type="evidence" value="ECO:0007669"/>
    <property type="project" value="InterPro"/>
</dbReference>
<dbReference type="GO" id="GO:0000049">
    <property type="term" value="F:tRNA binding"/>
    <property type="evidence" value="ECO:0007669"/>
    <property type="project" value="TreeGrafter"/>
</dbReference>
<dbReference type="GO" id="GO:0006430">
    <property type="term" value="P:lysyl-tRNA aminoacylation"/>
    <property type="evidence" value="ECO:0007669"/>
    <property type="project" value="InterPro"/>
</dbReference>
<dbReference type="FunFam" id="3.30.930.10:FF:000017">
    <property type="entry name" value="Elongation factor P--(R)-beta-lysine ligase"/>
    <property type="match status" value="1"/>
</dbReference>
<dbReference type="Gene3D" id="3.30.930.10">
    <property type="entry name" value="Bira Bifunctional Protein, Domain 2"/>
    <property type="match status" value="1"/>
</dbReference>
<dbReference type="HAMAP" id="MF_00174">
    <property type="entry name" value="EF_P_modif_A"/>
    <property type="match status" value="1"/>
</dbReference>
<dbReference type="InterPro" id="IPR004364">
    <property type="entry name" value="Aa-tRNA-synt_II"/>
</dbReference>
<dbReference type="InterPro" id="IPR006195">
    <property type="entry name" value="aa-tRNA-synth_II"/>
</dbReference>
<dbReference type="InterPro" id="IPR045864">
    <property type="entry name" value="aa-tRNA-synth_II/BPL/LPL"/>
</dbReference>
<dbReference type="InterPro" id="IPR004525">
    <property type="entry name" value="EpmA"/>
</dbReference>
<dbReference type="InterPro" id="IPR018149">
    <property type="entry name" value="Lys-tRNA-synth_II_C"/>
</dbReference>
<dbReference type="NCBIfam" id="TIGR00462">
    <property type="entry name" value="genX"/>
    <property type="match status" value="1"/>
</dbReference>
<dbReference type="NCBIfam" id="NF006828">
    <property type="entry name" value="PRK09350.1"/>
    <property type="match status" value="1"/>
</dbReference>
<dbReference type="PANTHER" id="PTHR42918:SF6">
    <property type="entry name" value="ELONGATION FACTOR P--(R)-BETA-LYSINE LIGASE"/>
    <property type="match status" value="1"/>
</dbReference>
<dbReference type="PANTHER" id="PTHR42918">
    <property type="entry name" value="LYSYL-TRNA SYNTHETASE"/>
    <property type="match status" value="1"/>
</dbReference>
<dbReference type="Pfam" id="PF00152">
    <property type="entry name" value="tRNA-synt_2"/>
    <property type="match status" value="1"/>
</dbReference>
<dbReference type="PRINTS" id="PR00982">
    <property type="entry name" value="TRNASYNTHLYS"/>
</dbReference>
<dbReference type="SUPFAM" id="SSF55681">
    <property type="entry name" value="Class II aaRS and biotin synthetases"/>
    <property type="match status" value="1"/>
</dbReference>
<dbReference type="PROSITE" id="PS50862">
    <property type="entry name" value="AA_TRNA_LIGASE_II"/>
    <property type="match status" value="1"/>
</dbReference>
<feature type="chain" id="PRO_1000023626" description="Elongation factor P--(R)-beta-lysine ligase">
    <location>
        <begin position="1"/>
        <end position="325"/>
    </location>
</feature>
<feature type="binding site" evidence="1">
    <location>
        <begin position="76"/>
        <end position="78"/>
    </location>
    <ligand>
        <name>substrate</name>
    </ligand>
</feature>
<feature type="binding site" evidence="1">
    <location>
        <begin position="100"/>
        <end position="102"/>
    </location>
    <ligand>
        <name>ATP</name>
        <dbReference type="ChEBI" id="CHEBI:30616"/>
    </ligand>
</feature>
<feature type="binding site" evidence="1">
    <location>
        <position position="109"/>
    </location>
    <ligand>
        <name>ATP</name>
        <dbReference type="ChEBI" id="CHEBI:30616"/>
    </ligand>
</feature>
<feature type="binding site" evidence="1">
    <location>
        <position position="118"/>
    </location>
    <ligand>
        <name>substrate</name>
    </ligand>
</feature>
<feature type="binding site" evidence="1">
    <location>
        <begin position="244"/>
        <end position="245"/>
    </location>
    <ligand>
        <name>ATP</name>
        <dbReference type="ChEBI" id="CHEBI:30616"/>
    </ligand>
</feature>
<feature type="binding site" evidence="1">
    <location>
        <position position="251"/>
    </location>
    <ligand>
        <name>substrate</name>
    </ligand>
</feature>
<feature type="binding site" evidence="1">
    <location>
        <position position="300"/>
    </location>
    <ligand>
        <name>ATP</name>
        <dbReference type="ChEBI" id="CHEBI:30616"/>
    </ligand>
</feature>
<proteinExistence type="inferred from homology"/>